<dbReference type="EMBL" id="GG657450">
    <property type="protein sequence ID" value="OAT06121.1"/>
    <property type="molecule type" value="Genomic_DNA"/>
</dbReference>
<dbReference type="RefSeq" id="XP_002627733.1">
    <property type="nucleotide sequence ID" value="XM_002627687.1"/>
</dbReference>
<dbReference type="STRING" id="559298.C5JIS5"/>
<dbReference type="GeneID" id="8506783"/>
<dbReference type="KEGG" id="bgh:BDBG_02404"/>
<dbReference type="VEuPathDB" id="FungiDB:BDBG_02404"/>
<dbReference type="HOGENOM" id="CLU_011918_1_0_1"/>
<dbReference type="OrthoDB" id="5338195at2759"/>
<dbReference type="Proteomes" id="UP000002038">
    <property type="component" value="Unassembled WGS sequence"/>
</dbReference>
<dbReference type="GO" id="GO:0005737">
    <property type="term" value="C:cytoplasm"/>
    <property type="evidence" value="ECO:0007669"/>
    <property type="project" value="UniProtKB-SubCell"/>
</dbReference>
<dbReference type="InterPro" id="IPR006571">
    <property type="entry name" value="TLDc_dom"/>
</dbReference>
<dbReference type="Pfam" id="PF07534">
    <property type="entry name" value="TLD"/>
    <property type="match status" value="1"/>
</dbReference>
<dbReference type="SMART" id="SM00584">
    <property type="entry name" value="TLDc"/>
    <property type="match status" value="1"/>
</dbReference>
<dbReference type="PROSITE" id="PS51886">
    <property type="entry name" value="TLDC"/>
    <property type="match status" value="1"/>
</dbReference>
<reference key="1">
    <citation type="journal article" date="2015" name="PLoS Genet.">
        <title>The dynamic genome and transcriptome of the human fungal pathogen Blastomyces and close relative Emmonsia.</title>
        <authorList>
            <person name="Munoz J.F."/>
            <person name="Gauthier G.M."/>
            <person name="Desjardins C.A."/>
            <person name="Gallo J.E."/>
            <person name="Holder J."/>
            <person name="Sullivan T.D."/>
            <person name="Marty A.J."/>
            <person name="Carmen J.C."/>
            <person name="Chen Z."/>
            <person name="Ding L."/>
            <person name="Gujja S."/>
            <person name="Magrini V."/>
            <person name="Misas E."/>
            <person name="Mitreva M."/>
            <person name="Priest M."/>
            <person name="Saif S."/>
            <person name="Whiston E.A."/>
            <person name="Young S."/>
            <person name="Zeng Q."/>
            <person name="Goldman W.E."/>
            <person name="Mardis E.R."/>
            <person name="Taylor J.W."/>
            <person name="McEwen J.G."/>
            <person name="Clay O.K."/>
            <person name="Klein B.S."/>
            <person name="Cuomo C.A."/>
        </authorList>
    </citation>
    <scope>NUCLEOTIDE SEQUENCE [LARGE SCALE GENOMIC DNA]</scope>
    <source>
        <strain>SLH14081</strain>
    </source>
</reference>
<protein>
    <recommendedName>
        <fullName>Restriction of telomere capping protein 5</fullName>
    </recommendedName>
</protein>
<gene>
    <name type="primary">RTC5</name>
    <name type="ORF">BDBG_02404</name>
</gene>
<feature type="chain" id="PRO_0000408808" description="Restriction of telomere capping protein 5">
    <location>
        <begin position="1"/>
        <end position="691"/>
    </location>
</feature>
<feature type="domain" description="TLDc" evidence="2">
    <location>
        <begin position="366"/>
        <end position="614"/>
    </location>
</feature>
<feature type="region of interest" description="Disordered" evidence="3">
    <location>
        <begin position="329"/>
        <end position="355"/>
    </location>
</feature>
<feature type="region of interest" description="Disordered" evidence="3">
    <location>
        <begin position="559"/>
        <end position="595"/>
    </location>
</feature>
<feature type="compositionally biased region" description="Pro residues" evidence="3">
    <location>
        <begin position="341"/>
        <end position="355"/>
    </location>
</feature>
<feature type="compositionally biased region" description="Low complexity" evidence="3">
    <location>
        <begin position="561"/>
        <end position="595"/>
    </location>
</feature>
<comment type="function">
    <text evidence="1">May be involved in a process influencing telomere capping.</text>
</comment>
<comment type="subcellular location">
    <subcellularLocation>
        <location evidence="1">Cytoplasm</location>
    </subcellularLocation>
</comment>
<comment type="similarity">
    <text evidence="4">Belongs to the RTC5 family.</text>
</comment>
<sequence>MGGALSTEAQRASSVEELSQRLAHRFATKCFTPLELTHLKDNFFSRALEQRGIRYWNEEILSDFLGIPDGAGSAATATSDGSLDAGPVIFRMVSYLGAFPFQNTMAPTVLTFEAMIKVVVLLTERYGKVLKRGKKDRIKLLFGSLADVGRRDIITQLKEAAEDSLESIGVADPNGGSTFAHNGGFLIDQPINDGEDEDDDDDLALAALESLDAIEVFKQDQRIDKTVFESKISLTTFRRLLTLLIVTAPLRPLGTVSKYTTGLSKSSLDTVHEQVDSILAALGSEVAEDGIGYKSFSELISTSLPYLFDPLTPLFEHLLFSKNLNLSRKSETSNGQADKPAPTPPSTPPRSPPLSPVILTGGFDSCILNPVILSHLSFFISTSPHIPNIFRNRTHLHPVFSSTEHGESLTSFSHHVMTWQAPTILLIRGAVTSENNEEQITTIGAYIPQPWKQSSSYSSRRSSESVHPSTLPCLFEIFPVHTVLQGSPSFSSLKSNMPVSHFSTKTGIAIGCIIPPSSRKSLGSDLHPKPAGGGSLLIDSALENATFVVSDGLNGEGVFLPPGVSPSGTTTTGTTSTKTPSSTSPTASAASVSTSNHNTTKSISIYNLEVWGIIPSQSLATQSDGTGSPIEKQDAIALQRAQWNFEAREAERRQAINMKVGGGESEAQTGRALLEMAGIIGDSQYSAHPHH</sequence>
<proteinExistence type="inferred from homology"/>
<organism>
    <name type="scientific">Blastomyces gilchristii (strain SLH14081)</name>
    <name type="common">Blastomyces dermatitidis</name>
    <dbReference type="NCBI Taxonomy" id="559298"/>
    <lineage>
        <taxon>Eukaryota</taxon>
        <taxon>Fungi</taxon>
        <taxon>Dikarya</taxon>
        <taxon>Ascomycota</taxon>
        <taxon>Pezizomycotina</taxon>
        <taxon>Eurotiomycetes</taxon>
        <taxon>Eurotiomycetidae</taxon>
        <taxon>Onygenales</taxon>
        <taxon>Ajellomycetaceae</taxon>
        <taxon>Blastomyces</taxon>
    </lineage>
</organism>
<evidence type="ECO:0000250" key="1"/>
<evidence type="ECO:0000255" key="2">
    <source>
        <dbReference type="PROSITE-ProRule" id="PRU01234"/>
    </source>
</evidence>
<evidence type="ECO:0000256" key="3">
    <source>
        <dbReference type="SAM" id="MobiDB-lite"/>
    </source>
</evidence>
<evidence type="ECO:0000305" key="4"/>
<keyword id="KW-0963">Cytoplasm</keyword>
<keyword id="KW-1185">Reference proteome</keyword>
<accession>C5JIS5</accession>
<accession>A0A179UGH5</accession>
<name>RTC5_BLAGS</name>